<gene>
    <name evidence="1" type="primary">folD</name>
    <name type="ordered locus">BB2533</name>
</gene>
<name>FOLD_BORBR</name>
<proteinExistence type="inferred from homology"/>
<reference key="1">
    <citation type="journal article" date="2003" name="Nat. Genet.">
        <title>Comparative analysis of the genome sequences of Bordetella pertussis, Bordetella parapertussis and Bordetella bronchiseptica.</title>
        <authorList>
            <person name="Parkhill J."/>
            <person name="Sebaihia M."/>
            <person name="Preston A."/>
            <person name="Murphy L.D."/>
            <person name="Thomson N.R."/>
            <person name="Harris D.E."/>
            <person name="Holden M.T.G."/>
            <person name="Churcher C.M."/>
            <person name="Bentley S.D."/>
            <person name="Mungall K.L."/>
            <person name="Cerdeno-Tarraga A.-M."/>
            <person name="Temple L."/>
            <person name="James K.D."/>
            <person name="Harris B."/>
            <person name="Quail M.A."/>
            <person name="Achtman M."/>
            <person name="Atkin R."/>
            <person name="Baker S."/>
            <person name="Basham D."/>
            <person name="Bason N."/>
            <person name="Cherevach I."/>
            <person name="Chillingworth T."/>
            <person name="Collins M."/>
            <person name="Cronin A."/>
            <person name="Davis P."/>
            <person name="Doggett J."/>
            <person name="Feltwell T."/>
            <person name="Goble A."/>
            <person name="Hamlin N."/>
            <person name="Hauser H."/>
            <person name="Holroyd S."/>
            <person name="Jagels K."/>
            <person name="Leather S."/>
            <person name="Moule S."/>
            <person name="Norberczak H."/>
            <person name="O'Neil S."/>
            <person name="Ormond D."/>
            <person name="Price C."/>
            <person name="Rabbinowitsch E."/>
            <person name="Rutter S."/>
            <person name="Sanders M."/>
            <person name="Saunders D."/>
            <person name="Seeger K."/>
            <person name="Sharp S."/>
            <person name="Simmonds M."/>
            <person name="Skelton J."/>
            <person name="Squares R."/>
            <person name="Squares S."/>
            <person name="Stevens K."/>
            <person name="Unwin L."/>
            <person name="Whitehead S."/>
            <person name="Barrell B.G."/>
            <person name="Maskell D.J."/>
        </authorList>
    </citation>
    <scope>NUCLEOTIDE SEQUENCE [LARGE SCALE GENOMIC DNA]</scope>
    <source>
        <strain>ATCC BAA-588 / NCTC 13252 / RB50</strain>
    </source>
</reference>
<keyword id="KW-0028">Amino-acid biosynthesis</keyword>
<keyword id="KW-0368">Histidine biosynthesis</keyword>
<keyword id="KW-0378">Hydrolase</keyword>
<keyword id="KW-0486">Methionine biosynthesis</keyword>
<keyword id="KW-0511">Multifunctional enzyme</keyword>
<keyword id="KW-0521">NADP</keyword>
<keyword id="KW-0554">One-carbon metabolism</keyword>
<keyword id="KW-0560">Oxidoreductase</keyword>
<keyword id="KW-0658">Purine biosynthesis</keyword>
<protein>
    <recommendedName>
        <fullName evidence="1">Bifunctional protein FolD</fullName>
    </recommendedName>
    <domain>
        <recommendedName>
            <fullName evidence="1">Methylenetetrahydrofolate dehydrogenase</fullName>
            <ecNumber evidence="1">1.5.1.5</ecNumber>
        </recommendedName>
    </domain>
    <domain>
        <recommendedName>
            <fullName evidence="1">Methenyltetrahydrofolate cyclohydrolase</fullName>
            <ecNumber evidence="1">3.5.4.9</ecNumber>
        </recommendedName>
    </domain>
</protein>
<sequence>MTARIIDGAALSQRIREEVAQRVQALTAKGVRPGLAVVLVGDDPASQVYVRNKVAACEKAGLHSVKEQYPADLTEAQLLERIDALNRDPSIHGILVQLPLPRHMDAHKVIEAIAAEKDVDGFHISNAGLLMTGQPLFRPCTPYGVMKMLESEGVALRGAEAVIVGASNIVGKPMAMLLLQAGATITICNSKTRDLGAQTRRADVLVVATGKPGMIDGSMIKPGAVVIDVGINRGADGKLCGDVDMASAREVAGAISPVPGGVGPMTIAMLLVNTVEAAERAAA</sequence>
<dbReference type="EC" id="1.5.1.5" evidence="1"/>
<dbReference type="EC" id="3.5.4.9" evidence="1"/>
<dbReference type="EMBL" id="BX640444">
    <property type="protein sequence ID" value="CAE33027.1"/>
    <property type="molecule type" value="Genomic_DNA"/>
</dbReference>
<dbReference type="RefSeq" id="WP_003811948.1">
    <property type="nucleotide sequence ID" value="NC_002927.3"/>
</dbReference>
<dbReference type="SMR" id="Q7WJG1"/>
<dbReference type="GeneID" id="93203218"/>
<dbReference type="KEGG" id="bbr:BB2533"/>
<dbReference type="eggNOG" id="COG0190">
    <property type="taxonomic scope" value="Bacteria"/>
</dbReference>
<dbReference type="HOGENOM" id="CLU_034045_2_1_4"/>
<dbReference type="UniPathway" id="UPA00193"/>
<dbReference type="Proteomes" id="UP000001027">
    <property type="component" value="Chromosome"/>
</dbReference>
<dbReference type="GO" id="GO:0005829">
    <property type="term" value="C:cytosol"/>
    <property type="evidence" value="ECO:0007669"/>
    <property type="project" value="TreeGrafter"/>
</dbReference>
<dbReference type="GO" id="GO:0004477">
    <property type="term" value="F:methenyltetrahydrofolate cyclohydrolase activity"/>
    <property type="evidence" value="ECO:0007669"/>
    <property type="project" value="UniProtKB-UniRule"/>
</dbReference>
<dbReference type="GO" id="GO:0004488">
    <property type="term" value="F:methylenetetrahydrofolate dehydrogenase (NADP+) activity"/>
    <property type="evidence" value="ECO:0007669"/>
    <property type="project" value="UniProtKB-UniRule"/>
</dbReference>
<dbReference type="GO" id="GO:0000105">
    <property type="term" value="P:L-histidine biosynthetic process"/>
    <property type="evidence" value="ECO:0007669"/>
    <property type="project" value="UniProtKB-KW"/>
</dbReference>
<dbReference type="GO" id="GO:0009086">
    <property type="term" value="P:methionine biosynthetic process"/>
    <property type="evidence" value="ECO:0007669"/>
    <property type="project" value="UniProtKB-KW"/>
</dbReference>
<dbReference type="GO" id="GO:0006164">
    <property type="term" value="P:purine nucleotide biosynthetic process"/>
    <property type="evidence" value="ECO:0007669"/>
    <property type="project" value="UniProtKB-KW"/>
</dbReference>
<dbReference type="GO" id="GO:0035999">
    <property type="term" value="P:tetrahydrofolate interconversion"/>
    <property type="evidence" value="ECO:0007669"/>
    <property type="project" value="UniProtKB-UniRule"/>
</dbReference>
<dbReference type="CDD" id="cd01080">
    <property type="entry name" value="NAD_bind_m-THF_DH_Cyclohyd"/>
    <property type="match status" value="1"/>
</dbReference>
<dbReference type="FunFam" id="3.40.50.10860:FF:000001">
    <property type="entry name" value="Bifunctional protein FolD"/>
    <property type="match status" value="1"/>
</dbReference>
<dbReference type="FunFam" id="3.40.50.720:FF:000094">
    <property type="entry name" value="Bifunctional protein FolD"/>
    <property type="match status" value="1"/>
</dbReference>
<dbReference type="Gene3D" id="3.40.50.10860">
    <property type="entry name" value="Leucine Dehydrogenase, chain A, domain 1"/>
    <property type="match status" value="1"/>
</dbReference>
<dbReference type="Gene3D" id="3.40.50.720">
    <property type="entry name" value="NAD(P)-binding Rossmann-like Domain"/>
    <property type="match status" value="1"/>
</dbReference>
<dbReference type="HAMAP" id="MF_01576">
    <property type="entry name" value="THF_DHG_CYH"/>
    <property type="match status" value="1"/>
</dbReference>
<dbReference type="InterPro" id="IPR046346">
    <property type="entry name" value="Aminoacid_DH-like_N_sf"/>
</dbReference>
<dbReference type="InterPro" id="IPR036291">
    <property type="entry name" value="NAD(P)-bd_dom_sf"/>
</dbReference>
<dbReference type="InterPro" id="IPR000672">
    <property type="entry name" value="THF_DH/CycHdrlase"/>
</dbReference>
<dbReference type="InterPro" id="IPR020630">
    <property type="entry name" value="THF_DH/CycHdrlase_cat_dom"/>
</dbReference>
<dbReference type="InterPro" id="IPR020867">
    <property type="entry name" value="THF_DH/CycHdrlase_CS"/>
</dbReference>
<dbReference type="InterPro" id="IPR020631">
    <property type="entry name" value="THF_DH/CycHdrlase_NAD-bd_dom"/>
</dbReference>
<dbReference type="NCBIfam" id="NF008058">
    <property type="entry name" value="PRK10792.1"/>
    <property type="match status" value="1"/>
</dbReference>
<dbReference type="NCBIfam" id="NF010783">
    <property type="entry name" value="PRK14186.1"/>
    <property type="match status" value="1"/>
</dbReference>
<dbReference type="NCBIfam" id="NF010786">
    <property type="entry name" value="PRK14189.1"/>
    <property type="match status" value="1"/>
</dbReference>
<dbReference type="PANTHER" id="PTHR48099:SF5">
    <property type="entry name" value="C-1-TETRAHYDROFOLATE SYNTHASE, CYTOPLASMIC"/>
    <property type="match status" value="1"/>
</dbReference>
<dbReference type="PANTHER" id="PTHR48099">
    <property type="entry name" value="C-1-TETRAHYDROFOLATE SYNTHASE, CYTOPLASMIC-RELATED"/>
    <property type="match status" value="1"/>
</dbReference>
<dbReference type="Pfam" id="PF00763">
    <property type="entry name" value="THF_DHG_CYH"/>
    <property type="match status" value="1"/>
</dbReference>
<dbReference type="Pfam" id="PF02882">
    <property type="entry name" value="THF_DHG_CYH_C"/>
    <property type="match status" value="1"/>
</dbReference>
<dbReference type="PRINTS" id="PR00085">
    <property type="entry name" value="THFDHDRGNASE"/>
</dbReference>
<dbReference type="SUPFAM" id="SSF53223">
    <property type="entry name" value="Aminoacid dehydrogenase-like, N-terminal domain"/>
    <property type="match status" value="1"/>
</dbReference>
<dbReference type="SUPFAM" id="SSF51735">
    <property type="entry name" value="NAD(P)-binding Rossmann-fold domains"/>
    <property type="match status" value="1"/>
</dbReference>
<dbReference type="PROSITE" id="PS00766">
    <property type="entry name" value="THF_DHG_CYH_1"/>
    <property type="match status" value="1"/>
</dbReference>
<dbReference type="PROSITE" id="PS00767">
    <property type="entry name" value="THF_DHG_CYH_2"/>
    <property type="match status" value="1"/>
</dbReference>
<accession>Q7WJG1</accession>
<comment type="function">
    <text evidence="1">Catalyzes the oxidation of 5,10-methylenetetrahydrofolate to 5,10-methenyltetrahydrofolate and then the hydrolysis of 5,10-methenyltetrahydrofolate to 10-formyltetrahydrofolate.</text>
</comment>
<comment type="catalytic activity">
    <reaction evidence="1">
        <text>(6R)-5,10-methylene-5,6,7,8-tetrahydrofolate + NADP(+) = (6R)-5,10-methenyltetrahydrofolate + NADPH</text>
        <dbReference type="Rhea" id="RHEA:22812"/>
        <dbReference type="ChEBI" id="CHEBI:15636"/>
        <dbReference type="ChEBI" id="CHEBI:57455"/>
        <dbReference type="ChEBI" id="CHEBI:57783"/>
        <dbReference type="ChEBI" id="CHEBI:58349"/>
        <dbReference type="EC" id="1.5.1.5"/>
    </reaction>
</comment>
<comment type="catalytic activity">
    <reaction evidence="1">
        <text>(6R)-5,10-methenyltetrahydrofolate + H2O = (6R)-10-formyltetrahydrofolate + H(+)</text>
        <dbReference type="Rhea" id="RHEA:23700"/>
        <dbReference type="ChEBI" id="CHEBI:15377"/>
        <dbReference type="ChEBI" id="CHEBI:15378"/>
        <dbReference type="ChEBI" id="CHEBI:57455"/>
        <dbReference type="ChEBI" id="CHEBI:195366"/>
        <dbReference type="EC" id="3.5.4.9"/>
    </reaction>
</comment>
<comment type="pathway">
    <text evidence="1">One-carbon metabolism; tetrahydrofolate interconversion.</text>
</comment>
<comment type="subunit">
    <text evidence="1">Homodimer.</text>
</comment>
<comment type="similarity">
    <text evidence="1">Belongs to the tetrahydrofolate dehydrogenase/cyclohydrolase family.</text>
</comment>
<evidence type="ECO:0000255" key="1">
    <source>
        <dbReference type="HAMAP-Rule" id="MF_01576"/>
    </source>
</evidence>
<organism>
    <name type="scientific">Bordetella bronchiseptica (strain ATCC BAA-588 / NCTC 13252 / RB50)</name>
    <name type="common">Alcaligenes bronchisepticus</name>
    <dbReference type="NCBI Taxonomy" id="257310"/>
    <lineage>
        <taxon>Bacteria</taxon>
        <taxon>Pseudomonadati</taxon>
        <taxon>Pseudomonadota</taxon>
        <taxon>Betaproteobacteria</taxon>
        <taxon>Burkholderiales</taxon>
        <taxon>Alcaligenaceae</taxon>
        <taxon>Bordetella</taxon>
    </lineage>
</organism>
<feature type="chain" id="PRO_0000268284" description="Bifunctional protein FolD">
    <location>
        <begin position="1"/>
        <end position="283"/>
    </location>
</feature>
<feature type="binding site" evidence="1">
    <location>
        <begin position="165"/>
        <end position="167"/>
    </location>
    <ligand>
        <name>NADP(+)</name>
        <dbReference type="ChEBI" id="CHEBI:58349"/>
    </ligand>
</feature>
<feature type="binding site" evidence="1">
    <location>
        <position position="190"/>
    </location>
    <ligand>
        <name>NADP(+)</name>
        <dbReference type="ChEBI" id="CHEBI:58349"/>
    </ligand>
</feature>
<feature type="binding site" evidence="1">
    <location>
        <position position="231"/>
    </location>
    <ligand>
        <name>NADP(+)</name>
        <dbReference type="ChEBI" id="CHEBI:58349"/>
    </ligand>
</feature>